<sequence>CMEPKKVGPCRAAMPRFYFNSASNKCEGFTYGGCDANHNNFQSEADCKKAC</sequence>
<proteinExistence type="inferred from homology"/>
<keyword id="KW-1015">Disulfide bond</keyword>
<keyword id="KW-0166">Nematocyst</keyword>
<keyword id="KW-0528">Neurotoxin</keyword>
<keyword id="KW-0646">Protease inhibitor</keyword>
<keyword id="KW-0964">Secreted</keyword>
<keyword id="KW-0722">Serine protease inhibitor</keyword>
<keyword id="KW-0800">Toxin</keyword>
<comment type="function">
    <text evidence="1 2 4">Weak serine protease inhibitor that has been tested on both trypsin and elastase (PubMed:29285938). May also act as a neurotoxin by inhibiting voltage-gated potassium channels (Kv) (By similarity). In vivo, is lethal to zebrafish larvae (PubMed:29285938).</text>
</comment>
<comment type="subcellular location">
    <subcellularLocation>
        <location evidence="6">Secreted</location>
    </subcellularLocation>
    <subcellularLocation>
        <location evidence="6">Nematocyst</location>
    </subcellularLocation>
</comment>
<comment type="toxic dose">
    <text evidence="4">LD(50) is 25 uM against zebrafish larvae.</text>
</comment>
<comment type="similarity">
    <text evidence="6">Belongs to the venom Kunitz-type family. Sea anemone type 2 potassium channel toxin subfamily.</text>
</comment>
<name>VKT1_PALCA</name>
<feature type="chain" id="PRO_0000453749" description="Kunitz-like toxin PcKuz1" evidence="7">
    <location>
        <begin position="1"/>
        <end position="51"/>
    </location>
</feature>
<feature type="disulfide bond" evidence="3">
    <location>
        <begin position="1"/>
        <end position="51"/>
    </location>
</feature>
<feature type="disulfide bond" evidence="3">
    <location>
        <begin position="10"/>
        <end position="34"/>
    </location>
</feature>
<feature type="disulfide bond" evidence="3">
    <location>
        <begin position="26"/>
        <end position="47"/>
    </location>
</feature>
<organism>
    <name type="scientific">Palythoa caribaeorum</name>
    <name type="common">White encrusting zoanthid coral</name>
    <dbReference type="NCBI Taxonomy" id="134933"/>
    <lineage>
        <taxon>Eukaryota</taxon>
        <taxon>Metazoa</taxon>
        <taxon>Cnidaria</taxon>
        <taxon>Anthozoa</taxon>
        <taxon>Hexacorallia</taxon>
        <taxon>Zoantharia</taxon>
        <taxon>Sphenopidae</taxon>
        <taxon>Palythoa</taxon>
    </lineage>
</organism>
<accession>P0DQQ9</accession>
<dbReference type="SMR" id="P0DQQ9"/>
<dbReference type="GO" id="GO:0005615">
    <property type="term" value="C:extracellular space"/>
    <property type="evidence" value="ECO:0007669"/>
    <property type="project" value="TreeGrafter"/>
</dbReference>
<dbReference type="GO" id="GO:0042151">
    <property type="term" value="C:nematocyst"/>
    <property type="evidence" value="ECO:0007669"/>
    <property type="project" value="UniProtKB-SubCell"/>
</dbReference>
<dbReference type="GO" id="GO:0004867">
    <property type="term" value="F:serine-type endopeptidase inhibitor activity"/>
    <property type="evidence" value="ECO:0007669"/>
    <property type="project" value="UniProtKB-KW"/>
</dbReference>
<dbReference type="GO" id="GO:0090729">
    <property type="term" value="F:toxin activity"/>
    <property type="evidence" value="ECO:0007669"/>
    <property type="project" value="UniProtKB-KW"/>
</dbReference>
<dbReference type="FunFam" id="4.10.410.10:FF:000021">
    <property type="entry name" value="Serine protease inhibitor, putative"/>
    <property type="match status" value="1"/>
</dbReference>
<dbReference type="Gene3D" id="4.10.410.10">
    <property type="entry name" value="Pancreatic trypsin inhibitor Kunitz domain"/>
    <property type="match status" value="1"/>
</dbReference>
<dbReference type="InterPro" id="IPR002223">
    <property type="entry name" value="Kunitz_BPTI"/>
</dbReference>
<dbReference type="InterPro" id="IPR036880">
    <property type="entry name" value="Kunitz_BPTI_sf"/>
</dbReference>
<dbReference type="InterPro" id="IPR020901">
    <property type="entry name" value="Prtase_inh_Kunz-CS"/>
</dbReference>
<dbReference type="InterPro" id="IPR050098">
    <property type="entry name" value="TFPI/VKTCI-like"/>
</dbReference>
<dbReference type="PANTHER" id="PTHR10083:SF374">
    <property type="entry name" value="BPTI_KUNITZ INHIBITOR DOMAIN-CONTAINING PROTEIN"/>
    <property type="match status" value="1"/>
</dbReference>
<dbReference type="PANTHER" id="PTHR10083">
    <property type="entry name" value="KUNITZ-TYPE PROTEASE INHIBITOR-RELATED"/>
    <property type="match status" value="1"/>
</dbReference>
<dbReference type="Pfam" id="PF00014">
    <property type="entry name" value="Kunitz_BPTI"/>
    <property type="match status" value="1"/>
</dbReference>
<dbReference type="PRINTS" id="PR00759">
    <property type="entry name" value="BASICPTASE"/>
</dbReference>
<dbReference type="SMART" id="SM00131">
    <property type="entry name" value="KU"/>
    <property type="match status" value="1"/>
</dbReference>
<dbReference type="SUPFAM" id="SSF57362">
    <property type="entry name" value="BPTI-like"/>
    <property type="match status" value="1"/>
</dbReference>
<dbReference type="PROSITE" id="PS00280">
    <property type="entry name" value="BPTI_KUNITZ_1"/>
    <property type="match status" value="1"/>
</dbReference>
<dbReference type="PROSITE" id="PS50279">
    <property type="entry name" value="BPTI_KUNITZ_2"/>
    <property type="match status" value="1"/>
</dbReference>
<evidence type="ECO:0000250" key="1">
    <source>
        <dbReference type="UniProtKB" id="P00980"/>
    </source>
</evidence>
<evidence type="ECO:0000250" key="2">
    <source>
        <dbReference type="UniProtKB" id="P0DQT3"/>
    </source>
</evidence>
<evidence type="ECO:0000255" key="3">
    <source>
        <dbReference type="PROSITE-ProRule" id="PRU00031"/>
    </source>
</evidence>
<evidence type="ECO:0000269" key="4">
    <source>
    </source>
</evidence>
<evidence type="ECO:0000303" key="5">
    <source>
    </source>
</evidence>
<evidence type="ECO:0000305" key="6"/>
<evidence type="ECO:0000305" key="7">
    <source>
    </source>
</evidence>
<protein>
    <recommendedName>
        <fullName evidence="5">Kunitz-like toxin PcKuz1</fullName>
    </recommendedName>
    <alternativeName>
        <fullName evidence="7">Kunitz-type serine protease inhibitor PcKuz1</fullName>
    </alternativeName>
    <alternativeName>
        <fullName evidence="6">PI-sphenopitoxin-Pc1a</fullName>
        <shortName evidence="6">PI-SPTX-Pc1a</shortName>
    </alternativeName>
</protein>
<reference key="1">
    <citation type="journal article" date="2018" name="J. Proteome Res.">
        <title>Novel kunitz-like peptides discovered in the zoanthid Palythoa caribaeorum through transcriptome sequencing.</title>
        <authorList>
            <person name="Liao Q."/>
            <person name="Li S."/>
            <person name="Siu S.W.I."/>
            <person name="Yang B."/>
            <person name="Huang C."/>
            <person name="Chan J.Y."/>
            <person name="Morlighem J.R.L."/>
            <person name="Wong C.T.T."/>
            <person name="Radis-Baptista G."/>
            <person name="Lee S.M."/>
        </authorList>
    </citation>
    <scope>NUCLEOTIDE SEQUENCE [MRNA]</scope>
    <scope>FUNCTION</scope>
    <scope>SYNTHESIS</scope>
    <scope>TOXIC DOSE</scope>
    <scope>3D-STRUCTURE MODELING</scope>
    <scope>BIOASSAY</scope>
</reference>